<accession>Q9BV35</accession>
<accession>B4DGB6</accession>
<accession>Q4LBC2</accession>
<accession>Q705K3</accession>
<accession>Q86Y43</accession>
<accession>Q8N2N4</accession>
<accession>Q96NQ4</accession>
<feature type="chain" id="PRO_0000317609" description="Mitochondrial adenyl nucleotide antiporter SLC25A23">
    <location>
        <begin position="1"/>
        <end position="468"/>
    </location>
</feature>
<feature type="topological domain" description="Mitochondrial intermembrane" evidence="18">
    <location>
        <begin position="1"/>
        <end position="188"/>
    </location>
</feature>
<feature type="transmembrane region" description="Helical; Name=1" evidence="2">
    <location>
        <begin position="189"/>
        <end position="206"/>
    </location>
</feature>
<feature type="topological domain" description="Mitochondrial matrix" evidence="18">
    <location>
        <begin position="207"/>
        <end position="243"/>
    </location>
</feature>
<feature type="transmembrane region" description="Helical; Name=2" evidence="2">
    <location>
        <begin position="244"/>
        <end position="263"/>
    </location>
</feature>
<feature type="topological domain" description="Mitochondrial intermembrane" evidence="18">
    <location>
        <begin position="264"/>
        <end position="286"/>
    </location>
</feature>
<feature type="transmembrane region" description="Helical; Name=3" evidence="2">
    <location>
        <begin position="287"/>
        <end position="300"/>
    </location>
</feature>
<feature type="topological domain" description="Mitochondrial matrix" evidence="18">
    <location>
        <begin position="301"/>
        <end position="336"/>
    </location>
</feature>
<feature type="transmembrane region" description="Helical; Name=4" evidence="2">
    <location>
        <begin position="337"/>
        <end position="356"/>
    </location>
</feature>
<feature type="topological domain" description="Mitochondrial intermembrane" evidence="18">
    <location>
        <begin position="357"/>
        <end position="379"/>
    </location>
</feature>
<feature type="transmembrane region" description="Helical; Name=5" evidence="2">
    <location>
        <begin position="380"/>
        <end position="397"/>
    </location>
</feature>
<feature type="topological domain" description="Mitochondrial matrix" evidence="18">
    <location>
        <begin position="398"/>
        <end position="436"/>
    </location>
</feature>
<feature type="transmembrane region" description="Helical; Name=6" evidence="2">
    <location>
        <begin position="437"/>
        <end position="456"/>
    </location>
</feature>
<feature type="topological domain" description="Mitochondrial intermembrane" evidence="18">
    <location>
        <begin position="457"/>
        <end position="468"/>
    </location>
</feature>
<feature type="domain" description="EF-hand 1" evidence="4">
    <location>
        <begin position="9"/>
        <end position="44"/>
    </location>
</feature>
<feature type="domain" description="EF-hand 2" evidence="4">
    <location>
        <begin position="77"/>
        <end position="112"/>
    </location>
</feature>
<feature type="domain" description="EF-hand 3" evidence="4">
    <location>
        <begin position="113"/>
        <end position="148"/>
    </location>
</feature>
<feature type="repeat" description="Solcar 1" evidence="3">
    <location>
        <begin position="183"/>
        <end position="269"/>
    </location>
</feature>
<feature type="repeat" description="Solcar 2" evidence="3">
    <location>
        <begin position="277"/>
        <end position="362"/>
    </location>
</feature>
<feature type="repeat" description="Solcar 3" evidence="3">
    <location>
        <begin position="374"/>
        <end position="462"/>
    </location>
</feature>
<feature type="region of interest" description="Regulatory N-terminal domain" evidence="1">
    <location>
        <begin position="1"/>
        <end position="149"/>
    </location>
</feature>
<feature type="region of interest" description="Disordered" evidence="5">
    <location>
        <begin position="34"/>
        <end position="67"/>
    </location>
</feature>
<feature type="region of interest" description="Linker region" evidence="1">
    <location>
        <begin position="150"/>
        <end position="159"/>
    </location>
</feature>
<feature type="region of interest" description="C-terminal transmembrane transporter domain" evidence="1">
    <location>
        <begin position="165"/>
        <end position="468"/>
    </location>
</feature>
<feature type="compositionally biased region" description="Acidic residues" evidence="5">
    <location>
        <begin position="58"/>
        <end position="67"/>
    </location>
</feature>
<feature type="binding site" evidence="4">
    <location>
        <position position="22"/>
    </location>
    <ligand>
        <name>Ca(2+)</name>
        <dbReference type="ChEBI" id="CHEBI:29108"/>
        <label>1</label>
    </ligand>
</feature>
<feature type="binding site" evidence="4">
    <location>
        <position position="24"/>
    </location>
    <ligand>
        <name>Ca(2+)</name>
        <dbReference type="ChEBI" id="CHEBI:29108"/>
        <label>1</label>
    </ligand>
</feature>
<feature type="binding site" evidence="4">
    <location>
        <position position="26"/>
    </location>
    <ligand>
        <name>Ca(2+)</name>
        <dbReference type="ChEBI" id="CHEBI:29108"/>
        <label>1</label>
    </ligand>
</feature>
<feature type="binding site" evidence="4">
    <location>
        <position position="28"/>
    </location>
    <ligand>
        <name>Ca(2+)</name>
        <dbReference type="ChEBI" id="CHEBI:29108"/>
        <label>1</label>
    </ligand>
</feature>
<feature type="binding site" evidence="4">
    <location>
        <position position="33"/>
    </location>
    <ligand>
        <name>Ca(2+)</name>
        <dbReference type="ChEBI" id="CHEBI:29108"/>
        <label>1</label>
    </ligand>
</feature>
<feature type="binding site" evidence="4">
    <location>
        <position position="90"/>
    </location>
    <ligand>
        <name>Ca(2+)</name>
        <dbReference type="ChEBI" id="CHEBI:29108"/>
        <label>2</label>
    </ligand>
</feature>
<feature type="binding site" evidence="4">
    <location>
        <position position="92"/>
    </location>
    <ligand>
        <name>Ca(2+)</name>
        <dbReference type="ChEBI" id="CHEBI:29108"/>
        <label>2</label>
    </ligand>
</feature>
<feature type="binding site" evidence="4">
    <location>
        <position position="94"/>
    </location>
    <ligand>
        <name>Ca(2+)</name>
        <dbReference type="ChEBI" id="CHEBI:29108"/>
        <label>2</label>
    </ligand>
</feature>
<feature type="binding site" evidence="4">
    <location>
        <position position="96"/>
    </location>
    <ligand>
        <name>Ca(2+)</name>
        <dbReference type="ChEBI" id="CHEBI:29108"/>
        <label>2</label>
    </ligand>
</feature>
<feature type="binding site" evidence="4">
    <location>
        <position position="101"/>
    </location>
    <ligand>
        <name>Ca(2+)</name>
        <dbReference type="ChEBI" id="CHEBI:29108"/>
        <label>2</label>
    </ligand>
</feature>
<feature type="splice variant" id="VSP_031074" description="In isoform 3." evidence="13">
    <original>T</original>
    <variation>TLSSAGFSAWIKDSTAEQNRSKTTVLARRSGSHLKSQHFGRPKWADHE</variation>
    <location>
        <position position="161"/>
    </location>
</feature>
<feature type="splice variant" id="VSP_031075" description="In isoform 2." evidence="14">
    <original>ASIEGGPQLSMLGLLRHILSQEGMRGLYRGIAPNFMKVIPAVSISYVVYENMKQALGVTSR</original>
    <variation>DVSVYKTDTVPTLIELTGRRGRKMLNKSFWN</variation>
    <location>
        <begin position="408"/>
        <end position="468"/>
    </location>
</feature>
<feature type="splice variant" id="VSP_031076" description="In isoform 3 and isoform 4." evidence="13 15">
    <original>ASIEGGPQLSMLGLLRHILSQEGMRGLYRGIAPNFMKVIPAVSISYVVYENMKQALGVTSR</original>
    <variation>GWSTVARFQITATSAFQVQAILLPQPPE</variation>
    <location>
        <begin position="408"/>
        <end position="468"/>
    </location>
</feature>
<feature type="mutagenesis site" description="Abolishes the ability to regulate mitochondrial calcium uptake; when associated with K-33; A-90 and K-101." evidence="9">
    <original>D</original>
    <variation>A</variation>
    <location>
        <position position="22"/>
    </location>
</feature>
<feature type="mutagenesis site" description="Abolishes the ability to regulate mitochondrial calcium uptake; when associated with A-22; A-90 and K-101." evidence="9">
    <original>E</original>
    <variation>K</variation>
    <location>
        <position position="33"/>
    </location>
</feature>
<feature type="mutagenesis site" description="Abolishes the ability to regulate mitochondrial calcium uptake; when associated with A-22; K-33 and K-101." evidence="9">
    <original>D</original>
    <variation>A</variation>
    <location>
        <position position="90"/>
    </location>
</feature>
<feature type="mutagenesis site" description="Abolishes the ability to regulate mitochondrial calcium uptake; when associated with A-22; K-33 and A-90." evidence="9">
    <original>E</original>
    <variation>K</variation>
    <location>
        <position position="101"/>
    </location>
</feature>
<keyword id="KW-0025">Alternative splicing</keyword>
<keyword id="KW-0050">Antiport</keyword>
<keyword id="KW-0106">Calcium</keyword>
<keyword id="KW-0472">Membrane</keyword>
<keyword id="KW-0479">Metal-binding</keyword>
<keyword id="KW-0496">Mitochondrion</keyword>
<keyword id="KW-0999">Mitochondrion inner membrane</keyword>
<keyword id="KW-1267">Proteomics identification</keyword>
<keyword id="KW-1185">Reference proteome</keyword>
<keyword id="KW-0677">Repeat</keyword>
<keyword id="KW-0812">Transmembrane</keyword>
<keyword id="KW-1133">Transmembrane helix</keyword>
<keyword id="KW-0813">Transport</keyword>
<gene>
    <name evidence="20" type="primary">SLC25A23</name>
    <name evidence="12" type="synonym">APC2</name>
    <name type="synonym">MCSC2</name>
    <name type="synonym">SCAMC3</name>
</gene>
<comment type="function">
    <text evidence="7 9 10">Electroneutral antiporter that mediates the transport of adenine nucleotides through the inner mitochondrial membrane. Originally identified as an ATP-magnesium/inorganic phosphate antiporter, it also acts as a broad specificity adenyl nucleotide antiporter. By regulating the mitochondrial matrix adenine nucleotide pool could adapt to changing cellular energetic demands and indirectly regulate adenine nucleotide-dependent metabolic pathways (PubMed:15123600). Also acts as a regulator of mitochondrial calcium uptake and can probably transport trace amounts of other divalent metal cations in complex with ATP (PubMed:24430870, PubMed:28695448). In vitro, a low activity is also observed with guanyl and pyrimidine nucleotides (PubMed:15123600).</text>
</comment>
<comment type="catalytic activity">
    <reaction evidence="7">
        <text>Mg(2+)(out) + phosphate(in) + ATP(out) = Mg(2+)(in) + phosphate(out) + ATP(in)</text>
        <dbReference type="Rhea" id="RHEA:65840"/>
        <dbReference type="ChEBI" id="CHEBI:18420"/>
        <dbReference type="ChEBI" id="CHEBI:30616"/>
        <dbReference type="ChEBI" id="CHEBI:43474"/>
    </reaction>
</comment>
<comment type="catalytic activity">
    <reaction evidence="7">
        <text>ADP(out) + phosphate(in) + H(+)(out) = ADP(in) + phosphate(out) + H(+)(in)</text>
        <dbReference type="Rhea" id="RHEA:65844"/>
        <dbReference type="ChEBI" id="CHEBI:15378"/>
        <dbReference type="ChEBI" id="CHEBI:43474"/>
        <dbReference type="ChEBI" id="CHEBI:456216"/>
    </reaction>
</comment>
<comment type="catalytic activity">
    <reaction evidence="7">
        <text>AMP(out) + phosphate(in) = AMP(in) + phosphate(out)</text>
        <dbReference type="Rhea" id="RHEA:70259"/>
        <dbReference type="ChEBI" id="CHEBI:43474"/>
        <dbReference type="ChEBI" id="CHEBI:456215"/>
    </reaction>
</comment>
<comment type="catalytic activity">
    <reaction evidence="7">
        <text>phosphate(in) + ATP(out) + 2 H(+)(out) = phosphate(out) + ATP(in) + 2 H(+)(in)</text>
        <dbReference type="Rhea" id="RHEA:72035"/>
        <dbReference type="ChEBI" id="CHEBI:15378"/>
        <dbReference type="ChEBI" id="CHEBI:30616"/>
        <dbReference type="ChEBI" id="CHEBI:43474"/>
    </reaction>
</comment>
<comment type="catalytic activity">
    <reaction evidence="7">
        <text>dADP(in) + ADP(out) = dADP(out) + ADP(in)</text>
        <dbReference type="Rhea" id="RHEA:72855"/>
        <dbReference type="ChEBI" id="CHEBI:57667"/>
        <dbReference type="ChEBI" id="CHEBI:456216"/>
    </reaction>
</comment>
<comment type="catalytic activity">
    <reaction evidence="7">
        <text>Mg(2+)(in) + ADP(out) + ATP(in) + H(+)(out) = Mg(2+)(out) + ADP(in) + ATP(out) + H(+)(in)</text>
        <dbReference type="Rhea" id="RHEA:73659"/>
        <dbReference type="ChEBI" id="CHEBI:15378"/>
        <dbReference type="ChEBI" id="CHEBI:18420"/>
        <dbReference type="ChEBI" id="CHEBI:30616"/>
        <dbReference type="ChEBI" id="CHEBI:456216"/>
    </reaction>
</comment>
<comment type="catalytic activity">
    <reaction evidence="7">
        <text>ADP(out) + diphosphate(in) = ADP(in) + diphosphate(out)</text>
        <dbReference type="Rhea" id="RHEA:73671"/>
        <dbReference type="ChEBI" id="CHEBI:33019"/>
        <dbReference type="ChEBI" id="CHEBI:456216"/>
    </reaction>
</comment>
<comment type="catalytic activity">
    <reaction evidence="7">
        <text>dAMP(in) + ADP(out) + H(+)(out) = dAMP(out) + ADP(in) + H(+)(in)</text>
        <dbReference type="Rhea" id="RHEA:73675"/>
        <dbReference type="ChEBI" id="CHEBI:15378"/>
        <dbReference type="ChEBI" id="CHEBI:58245"/>
        <dbReference type="ChEBI" id="CHEBI:456216"/>
    </reaction>
</comment>
<comment type="catalytic activity">
    <reaction evidence="7">
        <text>3'-AMP(in) + ADP(out) + H(+)(out) = 3'-AMP(out) + ADP(in) + H(+)(in)</text>
        <dbReference type="Rhea" id="RHEA:73679"/>
        <dbReference type="ChEBI" id="CHEBI:15378"/>
        <dbReference type="ChEBI" id="CHEBI:60880"/>
        <dbReference type="ChEBI" id="CHEBI:456216"/>
    </reaction>
</comment>
<comment type="catalytic activity">
    <reaction evidence="7">
        <text>dAMP(out) + phosphate(in) = dAMP(in) + phosphate(out)</text>
        <dbReference type="Rhea" id="RHEA:73687"/>
        <dbReference type="ChEBI" id="CHEBI:43474"/>
        <dbReference type="ChEBI" id="CHEBI:58245"/>
    </reaction>
</comment>
<comment type="catalytic activity">
    <reaction evidence="7">
        <text>3'-AMP(out) + phosphate(in) = 3'-AMP(in) + phosphate(out)</text>
        <dbReference type="Rhea" id="RHEA:73691"/>
        <dbReference type="ChEBI" id="CHEBI:43474"/>
        <dbReference type="ChEBI" id="CHEBI:60880"/>
    </reaction>
</comment>
<comment type="catalytic activity">
    <reaction evidence="7">
        <text>dADP(out) + phosphate(in) + H(+)(out) = dADP(in) + phosphate(out) + H(+)(in)</text>
        <dbReference type="Rhea" id="RHEA:73695"/>
        <dbReference type="ChEBI" id="CHEBI:15378"/>
        <dbReference type="ChEBI" id="CHEBI:43474"/>
        <dbReference type="ChEBI" id="CHEBI:57667"/>
    </reaction>
</comment>
<comment type="activity regulation">
    <text evidence="1 7">Activated by an increase in cytosolic calcium levels that induce a conformational change of the N-terminal regulatory domain, uncapping the channel and allowing transport (By similarity). Inhibited by bathophenanthroline, mersalyl, p-hydroxymercuribenzoate, bromcresol purple, tannic acid, pyridoxal 5'-phosphate and p-hydroxymercuribenzoate (PubMed:15123600).</text>
</comment>
<comment type="biophysicochemical properties">
    <kinetics>
        <KM evidence="7">1.3 mM for AMP</KM>
        <KM evidence="7">0.54 mM for ADP</KM>
        <KM evidence="7">0.31 mM for ATP</KM>
        <KM evidence="7">0.22 mM for ATP-Mg</KM>
        <KM evidence="7">1.4 mM for Pi</KM>
        <Vmax evidence="7">68.0 umol/min/g enzyme for AMP antiport</Vmax>
        <Vmax evidence="7">73.0 umol/min/g enzyme for ADP antiport</Vmax>
        <Vmax evidence="7">65.0 umol/min/g enzyme for ATP antiport</Vmax>
        <Vmax evidence="7">79.0 umol/min/g enzyme for ATP-Mg antiport</Vmax>
        <Vmax evidence="7">70.0 umol/min/g enzyme for inorganic phosphate antiport</Vmax>
        <Vmax evidence="7">37.0 umol/min/g enzyme for ATP-Mg:ATP-Mg antiport</Vmax>
        <Vmax evidence="7">34.0 umol/min/g enzyme for ATP-Mg:ATP antiport</Vmax>
        <Vmax evidence="7">32.0 umol/min/g enzyme for ATP-Mg:inorganic phosphate antiport</Vmax>
        <Vmax evidence="7">42.0 umol/min/g enzyme for ATP:ATP-Mg antiport</Vmax>
        <Vmax evidence="7">35.0 umol/min/g enzyme for ATP:ATP antiport</Vmax>
        <Vmax evidence="7">28.0 umol/min/g enzyme for ATP:inorganic phosphate antiport</Vmax>
    </kinetics>
</comment>
<comment type="subunit">
    <text evidence="9">Interacts with MCU (PubMed:24430870). Interacts with MICU1 (PubMed:24430870).</text>
</comment>
<comment type="interaction">
    <interactant intactId="EBI-2933255">
        <id>Q9BV35</id>
    </interactant>
    <interactant intactId="EBI-743771">
        <id>Q92624</id>
        <label>APPBP2</label>
    </interactant>
    <organismsDiffer>false</organismsDiffer>
    <experiments>3</experiments>
</comment>
<comment type="subcellular location">
    <subcellularLocation>
        <location evidence="17 18 19">Mitochondrion inner membrane</location>
        <topology evidence="2">Multi-pass membrane protein</topology>
    </subcellularLocation>
</comment>
<comment type="alternative products">
    <event type="alternative splicing"/>
    <isoform>
        <id>Q9BV35-1</id>
        <name>1</name>
        <name>SCaMC-3a</name>
        <sequence type="displayed"/>
    </isoform>
    <isoform>
        <id>Q9BV35-2</id>
        <name>2</name>
        <name>SCaMC-3b</name>
        <sequence type="described" ref="VSP_031075"/>
    </isoform>
    <isoform>
        <id>Q9BV35-3</id>
        <name>3</name>
        <name>SCaMC-3c</name>
        <sequence type="described" ref="VSP_031074 VSP_031076"/>
    </isoform>
    <isoform>
        <id>Q9BV35-4</id>
        <name>4</name>
        <name>SCaMC-3d</name>
        <sequence type="described" ref="VSP_031076"/>
    </isoform>
</comment>
<comment type="tissue specificity">
    <text evidence="6 7 8">Expressed at low levels in most tissues examined, with highest expression in brain, skeletal muscle and pancreas.</text>
</comment>
<comment type="domain">
    <text evidence="1">The regulatory N-terminal domain/NTD, binds calcium in the mitochondrial intermembrane space and regulates the antiporter activity of the transmembrane domain/TMD. In absence of calcium, the apo form of the N-terminal domain is intrinsically disordered and binds to the transmembrane domain, inhibiting the transporter activity. Binding of calcium leads to a major conformational change and abolishes the interaction with the transmembrane domain and the inhibition of the transporter activity.</text>
</comment>
<comment type="domain">
    <text evidence="1">The C-terminal mitochondrial carrier domain/transmembrane domain/TMD bears the transmembrane transporter activity.</text>
</comment>
<comment type="domain">
    <text evidence="1">Linker region/H9 could directly block the transport of substrates across the transporter.</text>
</comment>
<comment type="miscellaneous">
    <molecule>Isoform 3</molecule>
    <text evidence="16">May be produced at very low levels due to a premature stop codon in the mRNA, leading to nonsense-mediated mRNA decay.</text>
</comment>
<comment type="similarity">
    <text evidence="16">Belongs to the mitochondrial carrier (TC 2.A.29) family.</text>
</comment>
<comment type="sequence caution" evidence="16">
    <conflict type="erroneous initiation">
        <sequence resource="EMBL-CDS" id="BAB70825"/>
    </conflict>
    <text>Extended N-terminus.</text>
</comment>
<comment type="sequence caution" evidence="16">
    <conflict type="erroneous initiation">
        <sequence resource="EMBL-CDS" id="BAC11071"/>
    </conflict>
    <text>Truncated N-terminus.</text>
</comment>
<reference key="1">
    <citation type="journal article" date="2004" name="J. Biol. Chem.">
        <title>Identification of a novel human subfamily of mitochondrial carriers with calcium-binding domains.</title>
        <authorList>
            <person name="del Arco A."/>
            <person name="Satrustegui J."/>
        </authorList>
    </citation>
    <scope>NUCLEOTIDE SEQUENCE [MRNA] (ISOFORM 1)</scope>
    <scope>SUBCELLULAR LOCATION</scope>
    <scope>TISSUE SPECIFICITY</scope>
</reference>
<reference key="2">
    <citation type="journal article" date="2004" name="J. Biol. Chem.">
        <title>Identification of the mitochondrial ATP-Mg/Pi transporter. Bacterial expression, reconstitution, functional characterization, and tissue distribution.</title>
        <authorList>
            <person name="Fiermonte G."/>
            <person name="De Leonardis F."/>
            <person name="Todisco S."/>
            <person name="Palmieri L."/>
            <person name="Lasorsa F.M."/>
            <person name="Palmieri F."/>
        </authorList>
    </citation>
    <scope>NUCLEOTIDE SEQUENCE [MRNA] (ISOFORM 1)</scope>
    <scope>FUNCTION</scope>
    <scope>TRANSPORTER ACTIVITY</scope>
    <scope>BIOPHYSICOCHEMICAL PROPERTIES</scope>
    <scope>ACTIVITY REGULATION</scope>
    <scope>SUBCELLULAR LOCATION</scope>
    <scope>TOPOLOGY</scope>
    <scope>TISSUE SPECIFICITY</scope>
    <source>
        <tissue>Brain</tissue>
    </source>
</reference>
<reference key="3">
    <citation type="journal article" date="2005" name="Gene">
        <title>Cellular expression and alternative splicing of SLC25A23, a member of the mitochondrial Ca2+-dependent solute carrier gene family.</title>
        <authorList>
            <person name="Bassi M.T."/>
            <person name="Manzoni M."/>
            <person name="Bresciani R."/>
            <person name="Pizzo M.T."/>
            <person name="Della Monica A."/>
            <person name="Barlati S."/>
            <person name="Monti E."/>
            <person name="Borsani G."/>
        </authorList>
    </citation>
    <scope>NUCLEOTIDE SEQUENCE [MRNA] (ISOFORMS 1 AND 2)</scope>
    <scope>SUBCELLULAR LOCATION</scope>
    <scope>CALCIUM-BINDING</scope>
    <scope>TISSUE SPECIFICITY</scope>
</reference>
<reference key="4">
    <citation type="journal article" date="2004" name="Nat. Genet.">
        <title>Complete sequencing and characterization of 21,243 full-length human cDNAs.</title>
        <authorList>
            <person name="Ota T."/>
            <person name="Suzuki Y."/>
            <person name="Nishikawa T."/>
            <person name="Otsuki T."/>
            <person name="Sugiyama T."/>
            <person name="Irie R."/>
            <person name="Wakamatsu A."/>
            <person name="Hayashi K."/>
            <person name="Sato H."/>
            <person name="Nagai K."/>
            <person name="Kimura K."/>
            <person name="Makita H."/>
            <person name="Sekine M."/>
            <person name="Obayashi M."/>
            <person name="Nishi T."/>
            <person name="Shibahara T."/>
            <person name="Tanaka T."/>
            <person name="Ishii S."/>
            <person name="Yamamoto J."/>
            <person name="Saito K."/>
            <person name="Kawai Y."/>
            <person name="Isono Y."/>
            <person name="Nakamura Y."/>
            <person name="Nagahari K."/>
            <person name="Murakami K."/>
            <person name="Yasuda T."/>
            <person name="Iwayanagi T."/>
            <person name="Wagatsuma M."/>
            <person name="Shiratori A."/>
            <person name="Sudo H."/>
            <person name="Hosoiri T."/>
            <person name="Kaku Y."/>
            <person name="Kodaira H."/>
            <person name="Kondo H."/>
            <person name="Sugawara M."/>
            <person name="Takahashi M."/>
            <person name="Kanda K."/>
            <person name="Yokoi T."/>
            <person name="Furuya T."/>
            <person name="Kikkawa E."/>
            <person name="Omura Y."/>
            <person name="Abe K."/>
            <person name="Kamihara K."/>
            <person name="Katsuta N."/>
            <person name="Sato K."/>
            <person name="Tanikawa M."/>
            <person name="Yamazaki M."/>
            <person name="Ninomiya K."/>
            <person name="Ishibashi T."/>
            <person name="Yamashita H."/>
            <person name="Murakawa K."/>
            <person name="Fujimori K."/>
            <person name="Tanai H."/>
            <person name="Kimata M."/>
            <person name="Watanabe M."/>
            <person name="Hiraoka S."/>
            <person name="Chiba Y."/>
            <person name="Ishida S."/>
            <person name="Ono Y."/>
            <person name="Takiguchi S."/>
            <person name="Watanabe S."/>
            <person name="Yosida M."/>
            <person name="Hotuta T."/>
            <person name="Kusano J."/>
            <person name="Kanehori K."/>
            <person name="Takahashi-Fujii A."/>
            <person name="Hara H."/>
            <person name="Tanase T.-O."/>
            <person name="Nomura Y."/>
            <person name="Togiya S."/>
            <person name="Komai F."/>
            <person name="Hara R."/>
            <person name="Takeuchi K."/>
            <person name="Arita M."/>
            <person name="Imose N."/>
            <person name="Musashino K."/>
            <person name="Yuuki H."/>
            <person name="Oshima A."/>
            <person name="Sasaki N."/>
            <person name="Aotsuka S."/>
            <person name="Yoshikawa Y."/>
            <person name="Matsunawa H."/>
            <person name="Ichihara T."/>
            <person name="Shiohata N."/>
            <person name="Sano S."/>
            <person name="Moriya S."/>
            <person name="Momiyama H."/>
            <person name="Satoh N."/>
            <person name="Takami S."/>
            <person name="Terashima Y."/>
            <person name="Suzuki O."/>
            <person name="Nakagawa S."/>
            <person name="Senoh A."/>
            <person name="Mizoguchi H."/>
            <person name="Goto Y."/>
            <person name="Shimizu F."/>
            <person name="Wakebe H."/>
            <person name="Hishigaki H."/>
            <person name="Watanabe T."/>
            <person name="Sugiyama A."/>
            <person name="Takemoto M."/>
            <person name="Kawakami B."/>
            <person name="Yamazaki M."/>
            <person name="Watanabe K."/>
            <person name="Kumagai A."/>
            <person name="Itakura S."/>
            <person name="Fukuzumi Y."/>
            <person name="Fujimori Y."/>
            <person name="Komiyama M."/>
            <person name="Tashiro H."/>
            <person name="Tanigami A."/>
            <person name="Fujiwara T."/>
            <person name="Ono T."/>
            <person name="Yamada K."/>
            <person name="Fujii Y."/>
            <person name="Ozaki K."/>
            <person name="Hirao M."/>
            <person name="Ohmori Y."/>
            <person name="Kawabata A."/>
            <person name="Hikiji T."/>
            <person name="Kobatake N."/>
            <person name="Inagaki H."/>
            <person name="Ikema Y."/>
            <person name="Okamoto S."/>
            <person name="Okitani R."/>
            <person name="Kawakami T."/>
            <person name="Noguchi S."/>
            <person name="Itoh T."/>
            <person name="Shigeta K."/>
            <person name="Senba T."/>
            <person name="Matsumura K."/>
            <person name="Nakajima Y."/>
            <person name="Mizuno T."/>
            <person name="Morinaga M."/>
            <person name="Sasaki M."/>
            <person name="Togashi T."/>
            <person name="Oyama M."/>
            <person name="Hata H."/>
            <person name="Watanabe M."/>
            <person name="Komatsu T."/>
            <person name="Mizushima-Sugano J."/>
            <person name="Satoh T."/>
            <person name="Shirai Y."/>
            <person name="Takahashi Y."/>
            <person name="Nakagawa K."/>
            <person name="Okumura K."/>
            <person name="Nagase T."/>
            <person name="Nomura N."/>
            <person name="Kikuchi H."/>
            <person name="Masuho Y."/>
            <person name="Yamashita R."/>
            <person name="Nakai K."/>
            <person name="Yada T."/>
            <person name="Nakamura Y."/>
            <person name="Ohara O."/>
            <person name="Isogai T."/>
            <person name="Sugano S."/>
        </authorList>
    </citation>
    <scope>NUCLEOTIDE SEQUENCE [LARGE SCALE MRNA] (ISOFORM 1)</scope>
    <source>
        <tissue>Amygdala</tissue>
        <tissue>Cerebellum</tissue>
        <tissue>Embryo</tissue>
    </source>
</reference>
<reference key="5">
    <citation type="submission" date="2005-09" db="EMBL/GenBank/DDBJ databases">
        <authorList>
            <person name="Mural R.J."/>
            <person name="Istrail S."/>
            <person name="Sutton G.G."/>
            <person name="Florea L."/>
            <person name="Halpern A.L."/>
            <person name="Mobarry C.M."/>
            <person name="Lippert R."/>
            <person name="Walenz B."/>
            <person name="Shatkay H."/>
            <person name="Dew I."/>
            <person name="Miller J.R."/>
            <person name="Flanigan M.J."/>
            <person name="Edwards N.J."/>
            <person name="Bolanos R."/>
            <person name="Fasulo D."/>
            <person name="Halldorsson B.V."/>
            <person name="Hannenhalli S."/>
            <person name="Turner R."/>
            <person name="Yooseph S."/>
            <person name="Lu F."/>
            <person name="Nusskern D.R."/>
            <person name="Shue B.C."/>
            <person name="Zheng X.H."/>
            <person name="Zhong F."/>
            <person name="Delcher A.L."/>
            <person name="Huson D.H."/>
            <person name="Kravitz S.A."/>
            <person name="Mouchard L."/>
            <person name="Reinert K."/>
            <person name="Remington K.A."/>
            <person name="Clark A.G."/>
            <person name="Waterman M.S."/>
            <person name="Eichler E.E."/>
            <person name="Adams M.D."/>
            <person name="Hunkapiller M.W."/>
            <person name="Myers E.W."/>
            <person name="Venter J.C."/>
        </authorList>
    </citation>
    <scope>NUCLEOTIDE SEQUENCE [LARGE SCALE GENOMIC DNA]</scope>
</reference>
<reference key="6">
    <citation type="journal article" date="2004" name="Genome Res.">
        <title>The status, quality, and expansion of the NIH full-length cDNA project: the Mammalian Gene Collection (MGC).</title>
        <authorList>
            <consortium name="The MGC Project Team"/>
        </authorList>
    </citation>
    <scope>NUCLEOTIDE SEQUENCE [LARGE SCALE MRNA] (ISOFORM 3)</scope>
    <source>
        <tissue>Eye</tissue>
    </source>
</reference>
<reference key="7">
    <citation type="journal article" date="2005" name="Biochem. J.">
        <title>Novel variants of human SCaMC-3, an isoform of the ATP-Mg/P(i) mitochondrial carrier, generated by alternative splicing from 3'-flanking transposable elements.</title>
        <authorList>
            <person name="Del Arco A."/>
        </authorList>
    </citation>
    <scope>NUCLEOTIDE SEQUENCE [MRNA] OF 413-468 (ISOFORM 4)</scope>
    <scope>ALTERNATIVE SPLICING</scope>
</reference>
<reference key="8">
    <citation type="journal article" date="2014" name="Mol. Biol. Cell">
        <title>SLC25A23 augments mitochondrial Ca(2+) uptake, interacts with MCU, and induces oxidative stress-mediated cell death.</title>
        <authorList>
            <person name="Hoffman N.E."/>
            <person name="Chandramoorthy H.C."/>
            <person name="Shanmughapriya S."/>
            <person name="Zhang X.Q."/>
            <person name="Vallem S."/>
            <person name="Doonan P.J."/>
            <person name="Malliankaraman K."/>
            <person name="Guo S."/>
            <person name="Rajan S."/>
            <person name="Elrod J.W."/>
            <person name="Koch W.J."/>
            <person name="Cheung J.Y."/>
            <person name="Madesh M."/>
        </authorList>
    </citation>
    <scope>FUNCTION</scope>
    <scope>INTERACTION WITH MCU AND MICU1</scope>
    <scope>MUTAGENESIS OF ASP-22; GLU-33; ASP-90 AND GLU-101</scope>
</reference>
<reference key="9">
    <citation type="journal article" date="2017" name="J. Bioenerg. Biomembr.">
        <title>Mitochondrial ATP-Mg/phosphate carriers transport divalent inorganic cations in complex with ATP.</title>
        <authorList>
            <person name="Monne M."/>
            <person name="Daddabbo L."/>
            <person name="Giannossa L.C."/>
            <person name="Nicolardi M.C."/>
            <person name="Palmieri L."/>
            <person name="Miniero D.V."/>
            <person name="Mangone A."/>
            <person name="Palmieri F."/>
        </authorList>
    </citation>
    <scope>FUNCTION</scope>
</reference>
<name>SCMC3_HUMAN</name>
<sequence>MRGSPGDAERRQRWGRLFEELDSNKDGRVDVHELRQGLARLGGGNPDPGAQQGISSEGDADPDGGLDLEEFSRYLQEREQRLLLMFHSLDRNQDGHIDVSEIQQSFRALGISISLEQAEKILHSMDRDGTMTIDWQEWRDHFLLHSLENVEDVLYFWKHSTVLDIGECLTVPDEFSKQEKLTGMWWKQLVAGAVAGAVSRTGTAPLDRLKVFMQVHASKTNRLNILGGLRSMVLEGGIRSLWRGNGINVLKIAPESAIKFMAYEQIKRAILGQQETLHVQERFVAGSLAGATAQTIIYPMEVLKTRLTLRRTGQYKGLLDCARRILEREGPRAFYRGYLPNVLGIIPYAGIDLAVYETLKNWWLQQYSHDSADPGILVLLACGTISSTCGQIASYPLALVRTRMQAQASIEGGPQLSMLGLLRHILSQEGMRGLYRGIAPNFMKVIPAVSISYVVYENMKQALGVTSR</sequence>
<dbReference type="EMBL" id="AJ619988">
    <property type="protein sequence ID" value="CAF04494.1"/>
    <property type="molecule type" value="mRNA"/>
</dbReference>
<dbReference type="EMBL" id="AJ619962">
    <property type="protein sequence ID" value="CAF04059.1"/>
    <property type="molecule type" value="mRNA"/>
</dbReference>
<dbReference type="EMBL" id="AJ512835">
    <property type="protein sequence ID" value="CAD55563.1"/>
    <property type="molecule type" value="mRNA"/>
</dbReference>
<dbReference type="EMBL" id="AY750170">
    <property type="protein sequence ID" value="AAU95077.1"/>
    <property type="molecule type" value="mRNA"/>
</dbReference>
<dbReference type="EMBL" id="AK054901">
    <property type="protein sequence ID" value="BAB70825.1"/>
    <property type="status" value="ALT_INIT"/>
    <property type="molecule type" value="mRNA"/>
</dbReference>
<dbReference type="EMBL" id="AK074579">
    <property type="protein sequence ID" value="BAC11071.1"/>
    <property type="status" value="ALT_INIT"/>
    <property type="molecule type" value="mRNA"/>
</dbReference>
<dbReference type="EMBL" id="AK294514">
    <property type="protein sequence ID" value="BAG57727.1"/>
    <property type="molecule type" value="mRNA"/>
</dbReference>
<dbReference type="EMBL" id="CH471139">
    <property type="protein sequence ID" value="EAW69087.1"/>
    <property type="molecule type" value="Genomic_DNA"/>
</dbReference>
<dbReference type="EMBL" id="CH471139">
    <property type="protein sequence ID" value="EAW69089.1"/>
    <property type="molecule type" value="Genomic_DNA"/>
</dbReference>
<dbReference type="EMBL" id="BC001656">
    <property type="protein sequence ID" value="AAH01656.1"/>
    <property type="molecule type" value="mRNA"/>
</dbReference>
<dbReference type="EMBL" id="AJ879082">
    <property type="protein sequence ID" value="CAI51684.1"/>
    <property type="molecule type" value="mRNA"/>
</dbReference>
<dbReference type="EMBL" id="AJ879083">
    <property type="protein sequence ID" value="CAI51685.1"/>
    <property type="molecule type" value="mRNA"/>
</dbReference>
<dbReference type="CCDS" id="CCDS32882.1">
    <molecule id="Q9BV35-1"/>
</dbReference>
<dbReference type="RefSeq" id="NP_077008.2">
    <molecule id="Q9BV35-1"/>
    <property type="nucleotide sequence ID" value="NM_024103.2"/>
</dbReference>
<dbReference type="SMR" id="Q9BV35"/>
<dbReference type="BioGRID" id="122533">
    <property type="interactions" value="39"/>
</dbReference>
<dbReference type="FunCoup" id="Q9BV35">
    <property type="interactions" value="1553"/>
</dbReference>
<dbReference type="IntAct" id="Q9BV35">
    <property type="interactions" value="30"/>
</dbReference>
<dbReference type="STRING" id="9606.ENSP00000301454"/>
<dbReference type="TCDB" id="2.A.29.23.5">
    <property type="family name" value="the mitochondrial carrier (mc) family"/>
</dbReference>
<dbReference type="GlyGen" id="Q9BV35">
    <property type="glycosylation" value="1 site, 1 O-linked glycan (1 site)"/>
</dbReference>
<dbReference type="iPTMnet" id="Q9BV35"/>
<dbReference type="PhosphoSitePlus" id="Q9BV35"/>
<dbReference type="BioMuta" id="SLC25A23"/>
<dbReference type="DMDM" id="167016556"/>
<dbReference type="jPOST" id="Q9BV35"/>
<dbReference type="MassIVE" id="Q9BV35"/>
<dbReference type="PaxDb" id="9606-ENSP00000301454"/>
<dbReference type="PeptideAtlas" id="Q9BV35"/>
<dbReference type="ProteomicsDB" id="79158">
    <molecule id="Q9BV35-1"/>
</dbReference>
<dbReference type="ProteomicsDB" id="79159">
    <molecule id="Q9BV35-2"/>
</dbReference>
<dbReference type="ProteomicsDB" id="79160">
    <molecule id="Q9BV35-3"/>
</dbReference>
<dbReference type="ProteomicsDB" id="79161">
    <molecule id="Q9BV35-4"/>
</dbReference>
<dbReference type="Pumba" id="Q9BV35"/>
<dbReference type="Antibodypedia" id="24155">
    <property type="antibodies" value="96 antibodies from 20 providers"/>
</dbReference>
<dbReference type="DNASU" id="79085"/>
<dbReference type="Ensembl" id="ENST00000264088.8">
    <molecule id="Q9BV35-3"/>
    <property type="protein sequence ID" value="ENSP00000264088.3"/>
    <property type="gene ID" value="ENSG00000125648.15"/>
</dbReference>
<dbReference type="Ensembl" id="ENST00000301454.9">
    <molecule id="Q9BV35-1"/>
    <property type="protein sequence ID" value="ENSP00000301454.3"/>
    <property type="gene ID" value="ENSG00000125648.15"/>
</dbReference>
<dbReference type="Ensembl" id="ENST00000334510.9">
    <molecule id="Q9BV35-2"/>
    <property type="protein sequence ID" value="ENSP00000334537.4"/>
    <property type="gene ID" value="ENSG00000125648.15"/>
</dbReference>
<dbReference type="GeneID" id="79085"/>
<dbReference type="KEGG" id="hsa:79085"/>
<dbReference type="MANE-Select" id="ENST00000301454.9">
    <property type="protein sequence ID" value="ENSP00000301454.3"/>
    <property type="RefSeq nucleotide sequence ID" value="NM_024103.3"/>
    <property type="RefSeq protein sequence ID" value="NP_077008.2"/>
</dbReference>
<dbReference type="UCSC" id="uc002mex.2">
    <molecule id="Q9BV35-1"/>
    <property type="organism name" value="human"/>
</dbReference>
<dbReference type="AGR" id="HGNC:19375"/>
<dbReference type="CTD" id="79085"/>
<dbReference type="DisGeNET" id="79085"/>
<dbReference type="GeneCards" id="SLC25A23"/>
<dbReference type="HGNC" id="HGNC:19375">
    <property type="gene designation" value="SLC25A23"/>
</dbReference>
<dbReference type="HPA" id="ENSG00000125648">
    <property type="expression patterns" value="Tissue enriched (brain)"/>
</dbReference>
<dbReference type="MIM" id="608746">
    <property type="type" value="gene"/>
</dbReference>
<dbReference type="neXtProt" id="NX_Q9BV35"/>
<dbReference type="OpenTargets" id="ENSG00000125648"/>
<dbReference type="PharmGKB" id="PA134932456"/>
<dbReference type="VEuPathDB" id="HostDB:ENSG00000125648"/>
<dbReference type="eggNOG" id="KOG0036">
    <property type="taxonomic scope" value="Eukaryota"/>
</dbReference>
<dbReference type="GeneTree" id="ENSGT00940000159428"/>
<dbReference type="HOGENOM" id="CLU_015166_2_0_1"/>
<dbReference type="InParanoid" id="Q9BV35"/>
<dbReference type="OMA" id="MFHSLDH"/>
<dbReference type="OrthoDB" id="270584at2759"/>
<dbReference type="PAN-GO" id="Q9BV35">
    <property type="GO annotations" value="1 GO annotation based on evolutionary models"/>
</dbReference>
<dbReference type="PhylomeDB" id="Q9BV35"/>
<dbReference type="TreeFam" id="TF313492"/>
<dbReference type="PathwayCommons" id="Q9BV35"/>
<dbReference type="SignaLink" id="Q9BV35"/>
<dbReference type="BioGRID-ORCS" id="79085">
    <property type="hits" value="9 hits in 1159 CRISPR screens"/>
</dbReference>
<dbReference type="ChiTaRS" id="SLC25A23">
    <property type="organism name" value="human"/>
</dbReference>
<dbReference type="GenomeRNAi" id="79085"/>
<dbReference type="Pharos" id="Q9BV35">
    <property type="development level" value="Tbio"/>
</dbReference>
<dbReference type="PRO" id="PR:Q9BV35"/>
<dbReference type="Proteomes" id="UP000005640">
    <property type="component" value="Chromosome 19"/>
</dbReference>
<dbReference type="RNAct" id="Q9BV35">
    <property type="molecule type" value="protein"/>
</dbReference>
<dbReference type="Bgee" id="ENSG00000125648">
    <property type="expression patterns" value="Expressed in nucleus accumbens and 185 other cell types or tissues"/>
</dbReference>
<dbReference type="ExpressionAtlas" id="Q9BV35">
    <property type="expression patterns" value="baseline and differential"/>
</dbReference>
<dbReference type="GO" id="GO:0005743">
    <property type="term" value="C:mitochondrial inner membrane"/>
    <property type="evidence" value="ECO:0007669"/>
    <property type="project" value="UniProtKB-SubCell"/>
</dbReference>
<dbReference type="GO" id="GO:0005739">
    <property type="term" value="C:mitochondrion"/>
    <property type="evidence" value="ECO:0000314"/>
    <property type="project" value="HPA"/>
</dbReference>
<dbReference type="GO" id="GO:0000295">
    <property type="term" value="F:adenine nucleotide transmembrane transporter activity"/>
    <property type="evidence" value="ECO:0000314"/>
    <property type="project" value="UniProtKB"/>
</dbReference>
<dbReference type="GO" id="GO:0140988">
    <property type="term" value="F:ADP:phosphate antiporter activity"/>
    <property type="evidence" value="ECO:0000314"/>
    <property type="project" value="UniProtKB"/>
</dbReference>
<dbReference type="GO" id="GO:0005347">
    <property type="term" value="F:ATP transmembrane transporter activity"/>
    <property type="evidence" value="ECO:0000318"/>
    <property type="project" value="GO_Central"/>
</dbReference>
<dbReference type="GO" id="GO:0140987">
    <property type="term" value="F:ATP:phosphate antiporter activity"/>
    <property type="evidence" value="ECO:0000314"/>
    <property type="project" value="UniProtKB"/>
</dbReference>
<dbReference type="GO" id="GO:0005509">
    <property type="term" value="F:calcium ion binding"/>
    <property type="evidence" value="ECO:0000304"/>
    <property type="project" value="UniProtKB"/>
</dbReference>
<dbReference type="GO" id="GO:0051503">
    <property type="term" value="P:adenine nucleotide transport"/>
    <property type="evidence" value="ECO:0000314"/>
    <property type="project" value="UniProtKB"/>
</dbReference>
<dbReference type="GO" id="GO:0015866">
    <property type="term" value="P:ADP transport"/>
    <property type="evidence" value="ECO:0000318"/>
    <property type="project" value="GO_Central"/>
</dbReference>
<dbReference type="GO" id="GO:0015867">
    <property type="term" value="P:ATP transport"/>
    <property type="evidence" value="ECO:0000318"/>
    <property type="project" value="GO_Central"/>
</dbReference>
<dbReference type="GO" id="GO:0036444">
    <property type="term" value="P:calcium import into the mitochondrion"/>
    <property type="evidence" value="ECO:0000315"/>
    <property type="project" value="UniProtKB"/>
</dbReference>
<dbReference type="GO" id="GO:0071277">
    <property type="term" value="P:cellular response to calcium ion"/>
    <property type="evidence" value="ECO:0007669"/>
    <property type="project" value="Ensembl"/>
</dbReference>
<dbReference type="GO" id="GO:1990544">
    <property type="term" value="P:mitochondrial ATP transmembrane transport"/>
    <property type="evidence" value="ECO:0000314"/>
    <property type="project" value="UniProtKB"/>
</dbReference>
<dbReference type="GO" id="GO:0006851">
    <property type="term" value="P:mitochondrial calcium ion transmembrane transport"/>
    <property type="evidence" value="ECO:0000315"/>
    <property type="project" value="UniProtKB"/>
</dbReference>
<dbReference type="GO" id="GO:0051561">
    <property type="term" value="P:positive regulation of mitochondrial calcium ion concentration"/>
    <property type="evidence" value="ECO:0000315"/>
    <property type="project" value="UniProtKB"/>
</dbReference>
<dbReference type="GO" id="GO:1900069">
    <property type="term" value="P:regulation of cellular hyperosmotic salinity response"/>
    <property type="evidence" value="ECO:0000315"/>
    <property type="project" value="UniProtKB"/>
</dbReference>
<dbReference type="GO" id="GO:0002082">
    <property type="term" value="P:regulation of oxidative phosphorylation"/>
    <property type="evidence" value="ECO:0007669"/>
    <property type="project" value="Ensembl"/>
</dbReference>
<dbReference type="GO" id="GO:0051282">
    <property type="term" value="P:regulation of sequestering of calcium ion"/>
    <property type="evidence" value="ECO:0007669"/>
    <property type="project" value="Ensembl"/>
</dbReference>
<dbReference type="GO" id="GO:0003014">
    <property type="term" value="P:renal system process"/>
    <property type="evidence" value="ECO:0007669"/>
    <property type="project" value="Ensembl"/>
</dbReference>
<dbReference type="CDD" id="cd00051">
    <property type="entry name" value="EFh"/>
    <property type="match status" value="1"/>
</dbReference>
<dbReference type="FunFam" id="1.10.238.10:FF:000190">
    <property type="entry name" value="calcium-binding mitochondrial carrier protein SCaMC-3 isoform X2"/>
    <property type="match status" value="1"/>
</dbReference>
<dbReference type="FunFam" id="1.10.238.10:FF:000028">
    <property type="entry name" value="Putative calcium-binding mitochondrial carrier protein scamc-2"/>
    <property type="match status" value="1"/>
</dbReference>
<dbReference type="FunFam" id="1.50.40.10:FF:000003">
    <property type="entry name" value="Putative calcium-binding mitochondrial carrier protein scamc-2"/>
    <property type="match status" value="1"/>
</dbReference>
<dbReference type="Gene3D" id="1.10.238.10">
    <property type="entry name" value="EF-hand"/>
    <property type="match status" value="2"/>
</dbReference>
<dbReference type="Gene3D" id="1.50.40.10">
    <property type="entry name" value="Mitochondrial carrier domain"/>
    <property type="match status" value="1"/>
</dbReference>
<dbReference type="InterPro" id="IPR011992">
    <property type="entry name" value="EF-hand-dom_pair"/>
</dbReference>
<dbReference type="InterPro" id="IPR018247">
    <property type="entry name" value="EF_Hand_1_Ca_BS"/>
</dbReference>
<dbReference type="InterPro" id="IPR002048">
    <property type="entry name" value="EF_hand_dom"/>
</dbReference>
<dbReference type="InterPro" id="IPR002067">
    <property type="entry name" value="Mit_carrier"/>
</dbReference>
<dbReference type="InterPro" id="IPR018108">
    <property type="entry name" value="Mitochondrial_sb/sol_carrier"/>
</dbReference>
<dbReference type="InterPro" id="IPR023395">
    <property type="entry name" value="Mt_carrier_dom_sf"/>
</dbReference>
<dbReference type="PANTHER" id="PTHR24089">
    <property type="entry name" value="SOLUTE CARRIER FAMILY 25"/>
    <property type="match status" value="1"/>
</dbReference>
<dbReference type="Pfam" id="PF13499">
    <property type="entry name" value="EF-hand_7"/>
    <property type="match status" value="2"/>
</dbReference>
<dbReference type="Pfam" id="PF00153">
    <property type="entry name" value="Mito_carr"/>
    <property type="match status" value="3"/>
</dbReference>
<dbReference type="PRINTS" id="PR00926">
    <property type="entry name" value="MITOCARRIER"/>
</dbReference>
<dbReference type="SMART" id="SM00054">
    <property type="entry name" value="EFh"/>
    <property type="match status" value="3"/>
</dbReference>
<dbReference type="SUPFAM" id="SSF47473">
    <property type="entry name" value="EF-hand"/>
    <property type="match status" value="1"/>
</dbReference>
<dbReference type="SUPFAM" id="SSF103506">
    <property type="entry name" value="Mitochondrial carrier"/>
    <property type="match status" value="1"/>
</dbReference>
<dbReference type="PROSITE" id="PS00018">
    <property type="entry name" value="EF_HAND_1"/>
    <property type="match status" value="2"/>
</dbReference>
<dbReference type="PROSITE" id="PS50222">
    <property type="entry name" value="EF_HAND_2"/>
    <property type="match status" value="3"/>
</dbReference>
<dbReference type="PROSITE" id="PS50920">
    <property type="entry name" value="SOLCAR"/>
    <property type="match status" value="3"/>
</dbReference>
<protein>
    <recommendedName>
        <fullName evidence="18">Mitochondrial adenyl nucleotide antiporter SLC25A23</fullName>
    </recommendedName>
    <alternativeName>
        <fullName evidence="12">Mitochondrial ATP-Mg/Pi carrier protein 2</fullName>
    </alternativeName>
    <alternativeName>
        <fullName evidence="11">Short calcium-binding mitochondrial carrier protein 3</fullName>
        <shortName evidence="11">SCaMC-3</shortName>
    </alternativeName>
    <alternativeName>
        <fullName evidence="20">Solute carrier family 25 member 23</fullName>
    </alternativeName>
</protein>
<proteinExistence type="evidence at protein level"/>
<organism>
    <name type="scientific">Homo sapiens</name>
    <name type="common">Human</name>
    <dbReference type="NCBI Taxonomy" id="9606"/>
    <lineage>
        <taxon>Eukaryota</taxon>
        <taxon>Metazoa</taxon>
        <taxon>Chordata</taxon>
        <taxon>Craniata</taxon>
        <taxon>Vertebrata</taxon>
        <taxon>Euteleostomi</taxon>
        <taxon>Mammalia</taxon>
        <taxon>Eutheria</taxon>
        <taxon>Euarchontoglires</taxon>
        <taxon>Primates</taxon>
        <taxon>Haplorrhini</taxon>
        <taxon>Catarrhini</taxon>
        <taxon>Hominidae</taxon>
        <taxon>Homo</taxon>
    </lineage>
</organism>
<evidence type="ECO:0000250" key="1">
    <source>
        <dbReference type="UniProtKB" id="Q6NUK1"/>
    </source>
</evidence>
<evidence type="ECO:0000255" key="2"/>
<evidence type="ECO:0000255" key="3">
    <source>
        <dbReference type="PROSITE-ProRule" id="PRU00282"/>
    </source>
</evidence>
<evidence type="ECO:0000255" key="4">
    <source>
        <dbReference type="PROSITE-ProRule" id="PRU00448"/>
    </source>
</evidence>
<evidence type="ECO:0000256" key="5">
    <source>
        <dbReference type="SAM" id="MobiDB-lite"/>
    </source>
</evidence>
<evidence type="ECO:0000269" key="6">
    <source>
    </source>
</evidence>
<evidence type="ECO:0000269" key="7">
    <source>
    </source>
</evidence>
<evidence type="ECO:0000269" key="8">
    <source>
    </source>
</evidence>
<evidence type="ECO:0000269" key="9">
    <source>
    </source>
</evidence>
<evidence type="ECO:0000269" key="10">
    <source>
    </source>
</evidence>
<evidence type="ECO:0000303" key="11">
    <source>
    </source>
</evidence>
<evidence type="ECO:0000303" key="12">
    <source>
    </source>
</evidence>
<evidence type="ECO:0000303" key="13">
    <source>
    </source>
</evidence>
<evidence type="ECO:0000303" key="14">
    <source>
    </source>
</evidence>
<evidence type="ECO:0000303" key="15">
    <source>
    </source>
</evidence>
<evidence type="ECO:0000305" key="16"/>
<evidence type="ECO:0000305" key="17">
    <source>
    </source>
</evidence>
<evidence type="ECO:0000305" key="18">
    <source>
    </source>
</evidence>
<evidence type="ECO:0000305" key="19">
    <source>
    </source>
</evidence>
<evidence type="ECO:0000312" key="20">
    <source>
        <dbReference type="HGNC" id="HGNC:19375"/>
    </source>
</evidence>